<keyword id="KW-0131">Cell cycle</keyword>
<keyword id="KW-0132">Cell division</keyword>
<keyword id="KW-0997">Cell inner membrane</keyword>
<keyword id="KW-1003">Cell membrane</keyword>
<keyword id="KW-0472">Membrane</keyword>
<keyword id="KW-1185">Reference proteome</keyword>
<keyword id="KW-0812">Transmembrane</keyword>
<keyword id="KW-1133">Transmembrane helix</keyword>
<organism>
    <name type="scientific">Shigella dysenteriae serotype 1 (strain Sd197)</name>
    <dbReference type="NCBI Taxonomy" id="300267"/>
    <lineage>
        <taxon>Bacteria</taxon>
        <taxon>Pseudomonadati</taxon>
        <taxon>Pseudomonadota</taxon>
        <taxon>Gammaproteobacteria</taxon>
        <taxon>Enterobacterales</taxon>
        <taxon>Enterobacteriaceae</taxon>
        <taxon>Shigella</taxon>
    </lineage>
</organism>
<evidence type="ECO:0000255" key="1">
    <source>
        <dbReference type="HAMAP-Rule" id="MF_00910"/>
    </source>
</evidence>
<comment type="function">
    <text evidence="1">Essential cell division protein. May link together the upstream cell division proteins, which are predominantly cytoplasmic, with the downstream cell division proteins, which are predominantly periplasmic.</text>
</comment>
<comment type="subunit">
    <text evidence="1">Part of a complex composed of FtsB, FtsL and FtsQ.</text>
</comment>
<comment type="subcellular location">
    <subcellularLocation>
        <location evidence="1">Cell inner membrane</location>
        <topology evidence="1">Single-pass type II membrane protein</topology>
    </subcellularLocation>
    <text evidence="1">Localizes to the division septum where it forms a ring structure.</text>
</comment>
<comment type="similarity">
    <text evidence="1">Belongs to the FtsL family.</text>
</comment>
<name>FTSL_SHIDS</name>
<reference key="1">
    <citation type="journal article" date="2005" name="Nucleic Acids Res.">
        <title>Genome dynamics and diversity of Shigella species, the etiologic agents of bacillary dysentery.</title>
        <authorList>
            <person name="Yang F."/>
            <person name="Yang J."/>
            <person name="Zhang X."/>
            <person name="Chen L."/>
            <person name="Jiang Y."/>
            <person name="Yan Y."/>
            <person name="Tang X."/>
            <person name="Wang J."/>
            <person name="Xiong Z."/>
            <person name="Dong J."/>
            <person name="Xue Y."/>
            <person name="Zhu Y."/>
            <person name="Xu X."/>
            <person name="Sun L."/>
            <person name="Chen S."/>
            <person name="Nie H."/>
            <person name="Peng J."/>
            <person name="Xu J."/>
            <person name="Wang Y."/>
            <person name="Yuan Z."/>
            <person name="Wen Y."/>
            <person name="Yao Z."/>
            <person name="Shen Y."/>
            <person name="Qiang B."/>
            <person name="Hou Y."/>
            <person name="Yu J."/>
            <person name="Jin Q."/>
        </authorList>
    </citation>
    <scope>NUCLEOTIDE SEQUENCE [LARGE SCALE GENOMIC DNA]</scope>
    <source>
        <strain>Sd197</strain>
    </source>
</reference>
<proteinExistence type="inferred from homology"/>
<sequence length="121" mass="13627">MISRVTEALSKVKGSMGSHERHALPGVIGDDLLRFGKLPLCLFICIILTAVTVVTTAHHTRLLTAQREQLVLERDALDIEWRNLILEENALGDHSRVERIATEKLQMQHVDPSQENIVVQK</sequence>
<protein>
    <recommendedName>
        <fullName evidence="1">Cell division protein FtsL</fullName>
    </recommendedName>
</protein>
<gene>
    <name evidence="1" type="primary">ftsL</name>
    <name type="ordered locus">SDY_0113</name>
</gene>
<accession>Q32K09</accession>
<feature type="chain" id="PRO_0000414569" description="Cell division protein FtsL">
    <location>
        <begin position="1"/>
        <end position="121"/>
    </location>
</feature>
<feature type="topological domain" description="Cytoplasmic" evidence="1">
    <location>
        <begin position="1"/>
        <end position="34"/>
    </location>
</feature>
<feature type="transmembrane region" description="Helical" evidence="1">
    <location>
        <begin position="35"/>
        <end position="57"/>
    </location>
</feature>
<feature type="topological domain" description="Periplasmic" evidence="1">
    <location>
        <begin position="58"/>
        <end position="121"/>
    </location>
</feature>
<dbReference type="EMBL" id="CP000034">
    <property type="protein sequence ID" value="ABB60348.1"/>
    <property type="molecule type" value="Genomic_DNA"/>
</dbReference>
<dbReference type="RefSeq" id="WP_000625658.1">
    <property type="nucleotide sequence ID" value="NC_007606.1"/>
</dbReference>
<dbReference type="RefSeq" id="YP_401837.1">
    <property type="nucleotide sequence ID" value="NC_007606.1"/>
</dbReference>
<dbReference type="SMR" id="Q32K09"/>
<dbReference type="STRING" id="300267.SDY_0113"/>
<dbReference type="EnsemblBacteria" id="ABB60348">
    <property type="protein sequence ID" value="ABB60348"/>
    <property type="gene ID" value="SDY_0113"/>
</dbReference>
<dbReference type="GeneID" id="93777351"/>
<dbReference type="KEGG" id="sdy:SDY_0113"/>
<dbReference type="PATRIC" id="fig|300267.13.peg.132"/>
<dbReference type="HOGENOM" id="CLU_156524_2_0_6"/>
<dbReference type="Proteomes" id="UP000002716">
    <property type="component" value="Chromosome"/>
</dbReference>
<dbReference type="GO" id="GO:0032153">
    <property type="term" value="C:cell division site"/>
    <property type="evidence" value="ECO:0007669"/>
    <property type="project" value="UniProtKB-UniRule"/>
</dbReference>
<dbReference type="GO" id="GO:0005886">
    <property type="term" value="C:plasma membrane"/>
    <property type="evidence" value="ECO:0007669"/>
    <property type="project" value="UniProtKB-SubCell"/>
</dbReference>
<dbReference type="GO" id="GO:0043093">
    <property type="term" value="P:FtsZ-dependent cytokinesis"/>
    <property type="evidence" value="ECO:0007669"/>
    <property type="project" value="UniProtKB-UniRule"/>
</dbReference>
<dbReference type="HAMAP" id="MF_00910">
    <property type="entry name" value="FtsL"/>
    <property type="match status" value="1"/>
</dbReference>
<dbReference type="InterPro" id="IPR011922">
    <property type="entry name" value="Cell_div_FtsL"/>
</dbReference>
<dbReference type="NCBIfam" id="TIGR02209">
    <property type="entry name" value="ftsL_broad"/>
    <property type="match status" value="1"/>
</dbReference>
<dbReference type="NCBIfam" id="NF008040">
    <property type="entry name" value="PRK10772.1"/>
    <property type="match status" value="1"/>
</dbReference>
<dbReference type="PANTHER" id="PTHR37479">
    <property type="entry name" value="CELL DIVISION PROTEIN FTSL"/>
    <property type="match status" value="1"/>
</dbReference>
<dbReference type="PANTHER" id="PTHR37479:SF1">
    <property type="entry name" value="CELL DIVISION PROTEIN FTSL"/>
    <property type="match status" value="1"/>
</dbReference>
<dbReference type="Pfam" id="PF04999">
    <property type="entry name" value="FtsL"/>
    <property type="match status" value="1"/>
</dbReference>